<reference key="1">
    <citation type="journal article" date="2009" name="BMC Genomics">
        <title>Pseudogene accumulation in the evolutionary histories of Salmonella enterica serovars Paratyphi A and Typhi.</title>
        <authorList>
            <person name="Holt K.E."/>
            <person name="Thomson N.R."/>
            <person name="Wain J."/>
            <person name="Langridge G.C."/>
            <person name="Hasan R."/>
            <person name="Bhutta Z.A."/>
            <person name="Quail M.A."/>
            <person name="Norbertczak H."/>
            <person name="Walker D."/>
            <person name="Simmonds M."/>
            <person name="White B."/>
            <person name="Bason N."/>
            <person name="Mungall K."/>
            <person name="Dougan G."/>
            <person name="Parkhill J."/>
        </authorList>
    </citation>
    <scope>NUCLEOTIDE SEQUENCE [LARGE SCALE GENOMIC DNA]</scope>
    <source>
        <strain>AKU_12601</strain>
    </source>
</reference>
<sequence>MVFRIASSPYTHNQRQTSRIMLLVLIAALPGIAAQTWFFGWGTLFQIVLAAITALVAEAIVLRLRKQSVASHLQDYSALLTGLLLAVSIPPLAPWWIVVLGTGFAIIIAKQLYGGLGQNPFNPAMIGYVVLLISFPVQMTSWLPPYEIAATTPDILDTLRMIFSGHTASGGDMTLLRTGIDGISQATPLDTFKTSLRAGHSVEQIMQYPIYSGALAGVGWQWVNLAWLVGGVFLLWQKAIRWHIPVSFLLTLALCAALGWLFSPATLASPQLHLLSGATMLGAFFILTDPVTASTTNRGRLIFGALAGVLVWLIRSFGGYPDGVAFAVLLANITVPLIDYYTRPRVYGHRKG</sequence>
<dbReference type="EC" id="7.-.-.-" evidence="1"/>
<dbReference type="EMBL" id="FM200053">
    <property type="protein sequence ID" value="CAR59472.1"/>
    <property type="molecule type" value="Genomic_DNA"/>
</dbReference>
<dbReference type="RefSeq" id="WP_000231886.1">
    <property type="nucleotide sequence ID" value="NC_011147.1"/>
</dbReference>
<dbReference type="SMR" id="B5BKB3"/>
<dbReference type="KEGG" id="sek:SSPA1297"/>
<dbReference type="HOGENOM" id="CLU_042020_0_0_6"/>
<dbReference type="Proteomes" id="UP000001869">
    <property type="component" value="Chromosome"/>
</dbReference>
<dbReference type="GO" id="GO:0005886">
    <property type="term" value="C:plasma membrane"/>
    <property type="evidence" value="ECO:0007669"/>
    <property type="project" value="UniProtKB-SubCell"/>
</dbReference>
<dbReference type="GO" id="GO:0022900">
    <property type="term" value="P:electron transport chain"/>
    <property type="evidence" value="ECO:0007669"/>
    <property type="project" value="UniProtKB-UniRule"/>
</dbReference>
<dbReference type="GO" id="GO:0055085">
    <property type="term" value="P:transmembrane transport"/>
    <property type="evidence" value="ECO:0007669"/>
    <property type="project" value="InterPro"/>
</dbReference>
<dbReference type="HAMAP" id="MF_00462">
    <property type="entry name" value="RsxD_RnfD"/>
    <property type="match status" value="1"/>
</dbReference>
<dbReference type="InterPro" id="IPR004338">
    <property type="entry name" value="NqrB/RnfD"/>
</dbReference>
<dbReference type="InterPro" id="IPR011303">
    <property type="entry name" value="RnfD_bac"/>
</dbReference>
<dbReference type="NCBIfam" id="NF002011">
    <property type="entry name" value="PRK00816.1"/>
    <property type="match status" value="1"/>
</dbReference>
<dbReference type="NCBIfam" id="TIGR01946">
    <property type="entry name" value="rnfD"/>
    <property type="match status" value="1"/>
</dbReference>
<dbReference type="PANTHER" id="PTHR30578">
    <property type="entry name" value="ELECTRON TRANSPORT COMPLEX PROTEIN RNFD"/>
    <property type="match status" value="1"/>
</dbReference>
<dbReference type="PANTHER" id="PTHR30578:SF0">
    <property type="entry name" value="ION-TRANSLOCATING OXIDOREDUCTASE COMPLEX SUBUNIT D"/>
    <property type="match status" value="1"/>
</dbReference>
<dbReference type="Pfam" id="PF03116">
    <property type="entry name" value="NQR2_RnfD_RnfE"/>
    <property type="match status" value="1"/>
</dbReference>
<name>RSXD_SALPK</name>
<organism>
    <name type="scientific">Salmonella paratyphi A (strain AKU_12601)</name>
    <dbReference type="NCBI Taxonomy" id="554290"/>
    <lineage>
        <taxon>Bacteria</taxon>
        <taxon>Pseudomonadati</taxon>
        <taxon>Pseudomonadota</taxon>
        <taxon>Gammaproteobacteria</taxon>
        <taxon>Enterobacterales</taxon>
        <taxon>Enterobacteriaceae</taxon>
        <taxon>Salmonella</taxon>
    </lineage>
</organism>
<comment type="function">
    <text evidence="1">Part of a membrane-bound complex that couples electron transfer with translocation of ions across the membrane. Required to maintain the reduced state of SoxR.</text>
</comment>
<comment type="cofactor">
    <cofactor evidence="1">
        <name>FMN</name>
        <dbReference type="ChEBI" id="CHEBI:58210"/>
    </cofactor>
</comment>
<comment type="subunit">
    <text evidence="1">The complex is composed of six subunits: RsxA, RsxB, RsxC, RsxD, RsxE and RsxG.</text>
</comment>
<comment type="subcellular location">
    <subcellularLocation>
        <location evidence="1">Cell inner membrane</location>
        <topology evidence="1">Multi-pass membrane protein</topology>
    </subcellularLocation>
</comment>
<comment type="similarity">
    <text evidence="1">Belongs to the NqrB/RnfD family.</text>
</comment>
<keyword id="KW-0997">Cell inner membrane</keyword>
<keyword id="KW-1003">Cell membrane</keyword>
<keyword id="KW-0249">Electron transport</keyword>
<keyword id="KW-0285">Flavoprotein</keyword>
<keyword id="KW-0288">FMN</keyword>
<keyword id="KW-0472">Membrane</keyword>
<keyword id="KW-0597">Phosphoprotein</keyword>
<keyword id="KW-1278">Translocase</keyword>
<keyword id="KW-0812">Transmembrane</keyword>
<keyword id="KW-1133">Transmembrane helix</keyword>
<keyword id="KW-0813">Transport</keyword>
<feature type="chain" id="PRO_1000125397" description="Ion-translocating oxidoreductase complex subunit D">
    <location>
        <begin position="1"/>
        <end position="352"/>
    </location>
</feature>
<feature type="transmembrane region" description="Helical" evidence="1">
    <location>
        <begin position="20"/>
        <end position="40"/>
    </location>
</feature>
<feature type="transmembrane region" description="Helical" evidence="1">
    <location>
        <begin position="42"/>
        <end position="62"/>
    </location>
</feature>
<feature type="transmembrane region" description="Helical" evidence="1">
    <location>
        <begin position="69"/>
        <end position="91"/>
    </location>
</feature>
<feature type="transmembrane region" description="Helical" evidence="1">
    <location>
        <begin position="123"/>
        <end position="143"/>
    </location>
</feature>
<feature type="transmembrane region" description="Helical" evidence="1">
    <location>
        <begin position="215"/>
        <end position="235"/>
    </location>
</feature>
<feature type="transmembrane region" description="Helical" evidence="1">
    <location>
        <begin position="242"/>
        <end position="262"/>
    </location>
</feature>
<feature type="transmembrane region" description="Helical" evidence="1">
    <location>
        <begin position="267"/>
        <end position="287"/>
    </location>
</feature>
<feature type="transmembrane region" description="Helical" evidence="1">
    <location>
        <begin position="301"/>
        <end position="321"/>
    </location>
</feature>
<feature type="transmembrane region" description="Helical" evidence="1">
    <location>
        <begin position="322"/>
        <end position="342"/>
    </location>
</feature>
<feature type="modified residue" description="FMN phosphoryl threonine" evidence="1">
    <location>
        <position position="187"/>
    </location>
</feature>
<evidence type="ECO:0000255" key="1">
    <source>
        <dbReference type="HAMAP-Rule" id="MF_00462"/>
    </source>
</evidence>
<accession>B5BKB3</accession>
<proteinExistence type="inferred from homology"/>
<gene>
    <name evidence="1" type="primary">rsxD</name>
    <name type="ordered locus">SSPA1297</name>
</gene>
<protein>
    <recommendedName>
        <fullName evidence="1">Ion-translocating oxidoreductase complex subunit D</fullName>
        <ecNumber evidence="1">7.-.-.-</ecNumber>
    </recommendedName>
    <alternativeName>
        <fullName evidence="1">Rsx electron transport complex subunit D</fullName>
    </alternativeName>
</protein>